<accession>Q8RC39</accession>
<evidence type="ECO:0000255" key="1">
    <source>
        <dbReference type="HAMAP-Rule" id="MF_00121"/>
    </source>
</evidence>
<reference key="1">
    <citation type="journal article" date="2002" name="Genome Res.">
        <title>A complete sequence of the T. tengcongensis genome.</title>
        <authorList>
            <person name="Bao Q."/>
            <person name="Tian Y."/>
            <person name="Li W."/>
            <person name="Xu Z."/>
            <person name="Xuan Z."/>
            <person name="Hu S."/>
            <person name="Dong W."/>
            <person name="Yang J."/>
            <person name="Chen Y."/>
            <person name="Xue Y."/>
            <person name="Xu Y."/>
            <person name="Lai X."/>
            <person name="Huang L."/>
            <person name="Dong X."/>
            <person name="Ma Y."/>
            <person name="Ling L."/>
            <person name="Tan H."/>
            <person name="Chen R."/>
            <person name="Wang J."/>
            <person name="Yu J."/>
            <person name="Yang H."/>
        </authorList>
    </citation>
    <scope>NUCLEOTIDE SEQUENCE [LARGE SCALE GENOMIC DNA]</scope>
    <source>
        <strain>DSM 15242 / JCM 11007 / NBRC 100824 / MB4</strain>
    </source>
</reference>
<feature type="chain" id="PRO_0000148859" description="Aspartyl/glutamyl-tRNA(Asn/Gln) amidotransferase subunit B">
    <location>
        <begin position="1"/>
        <end position="475"/>
    </location>
</feature>
<comment type="function">
    <text evidence="1">Allows the formation of correctly charged Asn-tRNA(Asn) or Gln-tRNA(Gln) through the transamidation of misacylated Asp-tRNA(Asn) or Glu-tRNA(Gln) in organisms which lack either or both of asparaginyl-tRNA or glutaminyl-tRNA synthetases. The reaction takes place in the presence of glutamine and ATP through an activated phospho-Asp-tRNA(Asn) or phospho-Glu-tRNA(Gln).</text>
</comment>
<comment type="catalytic activity">
    <reaction evidence="1">
        <text>L-glutamyl-tRNA(Gln) + L-glutamine + ATP + H2O = L-glutaminyl-tRNA(Gln) + L-glutamate + ADP + phosphate + H(+)</text>
        <dbReference type="Rhea" id="RHEA:17521"/>
        <dbReference type="Rhea" id="RHEA-COMP:9681"/>
        <dbReference type="Rhea" id="RHEA-COMP:9684"/>
        <dbReference type="ChEBI" id="CHEBI:15377"/>
        <dbReference type="ChEBI" id="CHEBI:15378"/>
        <dbReference type="ChEBI" id="CHEBI:29985"/>
        <dbReference type="ChEBI" id="CHEBI:30616"/>
        <dbReference type="ChEBI" id="CHEBI:43474"/>
        <dbReference type="ChEBI" id="CHEBI:58359"/>
        <dbReference type="ChEBI" id="CHEBI:78520"/>
        <dbReference type="ChEBI" id="CHEBI:78521"/>
        <dbReference type="ChEBI" id="CHEBI:456216"/>
    </reaction>
</comment>
<comment type="catalytic activity">
    <reaction evidence="1">
        <text>L-aspartyl-tRNA(Asn) + L-glutamine + ATP + H2O = L-asparaginyl-tRNA(Asn) + L-glutamate + ADP + phosphate + 2 H(+)</text>
        <dbReference type="Rhea" id="RHEA:14513"/>
        <dbReference type="Rhea" id="RHEA-COMP:9674"/>
        <dbReference type="Rhea" id="RHEA-COMP:9677"/>
        <dbReference type="ChEBI" id="CHEBI:15377"/>
        <dbReference type="ChEBI" id="CHEBI:15378"/>
        <dbReference type="ChEBI" id="CHEBI:29985"/>
        <dbReference type="ChEBI" id="CHEBI:30616"/>
        <dbReference type="ChEBI" id="CHEBI:43474"/>
        <dbReference type="ChEBI" id="CHEBI:58359"/>
        <dbReference type="ChEBI" id="CHEBI:78515"/>
        <dbReference type="ChEBI" id="CHEBI:78516"/>
        <dbReference type="ChEBI" id="CHEBI:456216"/>
    </reaction>
</comment>
<comment type="subunit">
    <text evidence="1">Heterotrimer of A, B and C subunits.</text>
</comment>
<comment type="similarity">
    <text evidence="1">Belongs to the GatB/GatE family. GatB subfamily.</text>
</comment>
<name>GATB_CALS4</name>
<keyword id="KW-0067">ATP-binding</keyword>
<keyword id="KW-0436">Ligase</keyword>
<keyword id="KW-0547">Nucleotide-binding</keyword>
<keyword id="KW-0648">Protein biosynthesis</keyword>
<keyword id="KW-1185">Reference proteome</keyword>
<protein>
    <recommendedName>
        <fullName evidence="1">Aspartyl/glutamyl-tRNA(Asn/Gln) amidotransferase subunit B</fullName>
        <shortName evidence="1">Asp/Glu-ADT subunit B</shortName>
        <ecNumber evidence="1">6.3.5.-</ecNumber>
    </recommendedName>
</protein>
<dbReference type="EC" id="6.3.5.-" evidence="1"/>
<dbReference type="EMBL" id="AE008691">
    <property type="protein sequence ID" value="AAM23878.1"/>
    <property type="molecule type" value="Genomic_DNA"/>
</dbReference>
<dbReference type="RefSeq" id="WP_011025023.1">
    <property type="nucleotide sequence ID" value="NZ_JANUCV010000001.1"/>
</dbReference>
<dbReference type="SMR" id="Q8RC39"/>
<dbReference type="STRING" id="273068.TTE0608"/>
<dbReference type="KEGG" id="tte:TTE0608"/>
<dbReference type="eggNOG" id="COG0064">
    <property type="taxonomic scope" value="Bacteria"/>
</dbReference>
<dbReference type="HOGENOM" id="CLU_019240_0_0_9"/>
<dbReference type="OrthoDB" id="9804078at2"/>
<dbReference type="Proteomes" id="UP000000555">
    <property type="component" value="Chromosome"/>
</dbReference>
<dbReference type="GO" id="GO:0050566">
    <property type="term" value="F:asparaginyl-tRNA synthase (glutamine-hydrolyzing) activity"/>
    <property type="evidence" value="ECO:0007669"/>
    <property type="project" value="RHEA"/>
</dbReference>
<dbReference type="GO" id="GO:0005524">
    <property type="term" value="F:ATP binding"/>
    <property type="evidence" value="ECO:0007669"/>
    <property type="project" value="UniProtKB-KW"/>
</dbReference>
<dbReference type="GO" id="GO:0050567">
    <property type="term" value="F:glutaminyl-tRNA synthase (glutamine-hydrolyzing) activity"/>
    <property type="evidence" value="ECO:0007669"/>
    <property type="project" value="UniProtKB-UniRule"/>
</dbReference>
<dbReference type="GO" id="GO:0070681">
    <property type="term" value="P:glutaminyl-tRNAGln biosynthesis via transamidation"/>
    <property type="evidence" value="ECO:0007669"/>
    <property type="project" value="TreeGrafter"/>
</dbReference>
<dbReference type="GO" id="GO:0006412">
    <property type="term" value="P:translation"/>
    <property type="evidence" value="ECO:0007669"/>
    <property type="project" value="UniProtKB-UniRule"/>
</dbReference>
<dbReference type="FunFam" id="1.10.10.410:FF:000001">
    <property type="entry name" value="Aspartyl/glutamyl-tRNA(Asn/Gln) amidotransferase subunit B"/>
    <property type="match status" value="1"/>
</dbReference>
<dbReference type="FunFam" id="1.10.150.380:FF:000001">
    <property type="entry name" value="Aspartyl/glutamyl-tRNA(Asn/Gln) amidotransferase subunit B"/>
    <property type="match status" value="1"/>
</dbReference>
<dbReference type="Gene3D" id="1.10.10.410">
    <property type="match status" value="1"/>
</dbReference>
<dbReference type="Gene3D" id="1.10.150.380">
    <property type="entry name" value="GatB domain, N-terminal subdomain"/>
    <property type="match status" value="1"/>
</dbReference>
<dbReference type="HAMAP" id="MF_00121">
    <property type="entry name" value="GatB"/>
    <property type="match status" value="1"/>
</dbReference>
<dbReference type="InterPro" id="IPR017959">
    <property type="entry name" value="Asn/Gln-tRNA_amidoTrfase_suB/E"/>
</dbReference>
<dbReference type="InterPro" id="IPR006075">
    <property type="entry name" value="Asn/Gln-tRNA_Trfase_suB/E_cat"/>
</dbReference>
<dbReference type="InterPro" id="IPR018027">
    <property type="entry name" value="Asn/Gln_amidotransferase"/>
</dbReference>
<dbReference type="InterPro" id="IPR003789">
    <property type="entry name" value="Asn/Gln_tRNA_amidoTrase-B-like"/>
</dbReference>
<dbReference type="InterPro" id="IPR004413">
    <property type="entry name" value="GatB"/>
</dbReference>
<dbReference type="InterPro" id="IPR042114">
    <property type="entry name" value="GatB_C_1"/>
</dbReference>
<dbReference type="InterPro" id="IPR023168">
    <property type="entry name" value="GatB_Yqey_C_2"/>
</dbReference>
<dbReference type="InterPro" id="IPR017958">
    <property type="entry name" value="Gln-tRNA_amidoTrfase_suB_CS"/>
</dbReference>
<dbReference type="InterPro" id="IPR014746">
    <property type="entry name" value="Gln_synth/guanido_kin_cat_dom"/>
</dbReference>
<dbReference type="NCBIfam" id="TIGR00133">
    <property type="entry name" value="gatB"/>
    <property type="match status" value="1"/>
</dbReference>
<dbReference type="NCBIfam" id="NF004012">
    <property type="entry name" value="PRK05477.1-2"/>
    <property type="match status" value="1"/>
</dbReference>
<dbReference type="NCBIfam" id="NF004014">
    <property type="entry name" value="PRK05477.1-4"/>
    <property type="match status" value="1"/>
</dbReference>
<dbReference type="NCBIfam" id="NF004015">
    <property type="entry name" value="PRK05477.1-5"/>
    <property type="match status" value="1"/>
</dbReference>
<dbReference type="PANTHER" id="PTHR11659">
    <property type="entry name" value="GLUTAMYL-TRNA GLN AMIDOTRANSFERASE SUBUNIT B MITOCHONDRIAL AND PROKARYOTIC PET112-RELATED"/>
    <property type="match status" value="1"/>
</dbReference>
<dbReference type="PANTHER" id="PTHR11659:SF0">
    <property type="entry name" value="GLUTAMYL-TRNA(GLN) AMIDOTRANSFERASE SUBUNIT B, MITOCHONDRIAL"/>
    <property type="match status" value="1"/>
</dbReference>
<dbReference type="Pfam" id="PF02934">
    <property type="entry name" value="GatB_N"/>
    <property type="match status" value="1"/>
</dbReference>
<dbReference type="Pfam" id="PF02637">
    <property type="entry name" value="GatB_Yqey"/>
    <property type="match status" value="1"/>
</dbReference>
<dbReference type="SMART" id="SM00845">
    <property type="entry name" value="GatB_Yqey"/>
    <property type="match status" value="1"/>
</dbReference>
<dbReference type="SUPFAM" id="SSF89095">
    <property type="entry name" value="GatB/YqeY motif"/>
    <property type="match status" value="1"/>
</dbReference>
<dbReference type="SUPFAM" id="SSF55931">
    <property type="entry name" value="Glutamine synthetase/guanido kinase"/>
    <property type="match status" value="1"/>
</dbReference>
<dbReference type="PROSITE" id="PS01234">
    <property type="entry name" value="GATB"/>
    <property type="match status" value="1"/>
</dbReference>
<gene>
    <name evidence="1" type="primary">gatB</name>
    <name type="ordered locus">TTE0608</name>
</gene>
<organism>
    <name type="scientific">Caldanaerobacter subterraneus subsp. tengcongensis (strain DSM 15242 / JCM 11007 / NBRC 100824 / MB4)</name>
    <name type="common">Thermoanaerobacter tengcongensis</name>
    <dbReference type="NCBI Taxonomy" id="273068"/>
    <lineage>
        <taxon>Bacteria</taxon>
        <taxon>Bacillati</taxon>
        <taxon>Bacillota</taxon>
        <taxon>Clostridia</taxon>
        <taxon>Thermoanaerobacterales</taxon>
        <taxon>Thermoanaerobacteraceae</taxon>
        <taxon>Caldanaerobacter</taxon>
    </lineage>
</organism>
<proteinExistence type="inferred from homology"/>
<sequence length="475" mass="53803">MKYEAVIGLEVHAELLTDSKIFCGCSTKFGSEPNTQVCPVCLGLPGTLPVLNKKVVEYAVRAGLALNCTIANFSKMDRKNYFYPDLPKAYQISQYDLPLCSNGYIEIEVEGGTKRIGIKRIHIEEDAGKLLHEGTDGSLVDYNRAGVPLIEIVSEPDISTPEEAYQYLVKLKSILEYTEVSDCKMQEGSLRVDTNVSVRPVGTTELGTKIELKNLNSFKAVQKALEYEIKRQIKVLEEGGTIVQETRRWNEAKGITEPMRTKEEAHDYRYFPEPDLVPIIVTEEWKEEIRKTLPEMPDAKRERFITQYGLPEYDAKVITSSKKMADFFEKCASNYHSPKIVSNWLMGEFARLLNDTGKEIDEVPITPDMLIELLKLVDDNVISGSIAKTVFEEMFFTGKNPQIIVEEKGLRQIADEGELRRIVRKVIEENPKSVEDYKKGKEKALGFLVGQVMKETKGKANPQLTNQLLREELSK</sequence>